<evidence type="ECO:0000255" key="1">
    <source>
        <dbReference type="PROSITE-ProRule" id="PRU00467"/>
    </source>
</evidence>
<feature type="chain" id="PRO_0000142396" description="Protein VNG_2543C">
    <location>
        <begin position="1"/>
        <end position="210"/>
    </location>
</feature>
<feature type="domain" description="AMMECR1" evidence="1">
    <location>
        <begin position="12"/>
        <end position="206"/>
    </location>
</feature>
<accession>Q9HMH2</accession>
<name>Y2543_HALSA</name>
<protein>
    <recommendedName>
        <fullName>Protein VNG_2543C</fullName>
    </recommendedName>
</protein>
<dbReference type="EMBL" id="AE004437">
    <property type="protein sequence ID" value="AAG20599.1"/>
    <property type="molecule type" value="Genomic_DNA"/>
</dbReference>
<dbReference type="PIR" id="C84404">
    <property type="entry name" value="C84404"/>
</dbReference>
<dbReference type="RefSeq" id="WP_010903901.1">
    <property type="nucleotide sequence ID" value="NC_002607.1"/>
</dbReference>
<dbReference type="SMR" id="Q9HMH2"/>
<dbReference type="FunCoup" id="Q9HMH2">
    <property type="interactions" value="68"/>
</dbReference>
<dbReference type="STRING" id="64091.VNG_2543C"/>
<dbReference type="PaxDb" id="64091-VNG_2543C"/>
<dbReference type="KEGG" id="hal:VNG_2543C"/>
<dbReference type="PATRIC" id="fig|64091.14.peg.1971"/>
<dbReference type="HOGENOM" id="CLU_095686_1_0_2"/>
<dbReference type="InParanoid" id="Q9HMH2"/>
<dbReference type="OrthoDB" id="25187at2157"/>
<dbReference type="Proteomes" id="UP000000554">
    <property type="component" value="Chromosome"/>
</dbReference>
<dbReference type="Gene3D" id="3.30.700.20">
    <property type="entry name" value="Hypothetical protein ph0010, domain 1"/>
    <property type="match status" value="1"/>
</dbReference>
<dbReference type="Gene3D" id="3.30.1490.150">
    <property type="entry name" value="Hypothetical protein ph0010, domain 2"/>
    <property type="match status" value="1"/>
</dbReference>
<dbReference type="InterPro" id="IPR023473">
    <property type="entry name" value="AMMECR1"/>
</dbReference>
<dbReference type="InterPro" id="IPR036071">
    <property type="entry name" value="AMMECR1_dom_sf"/>
</dbReference>
<dbReference type="InterPro" id="IPR002733">
    <property type="entry name" value="AMMECR1_domain"/>
</dbReference>
<dbReference type="InterPro" id="IPR027485">
    <property type="entry name" value="AMMECR1_N"/>
</dbReference>
<dbReference type="NCBIfam" id="TIGR00296">
    <property type="entry name" value="TIGR00296 family protein"/>
    <property type="match status" value="1"/>
</dbReference>
<dbReference type="PANTHER" id="PTHR13016:SF0">
    <property type="entry name" value="AMME SYNDROME CANDIDATE GENE 1 PROTEIN"/>
    <property type="match status" value="1"/>
</dbReference>
<dbReference type="PANTHER" id="PTHR13016">
    <property type="entry name" value="AMMECR1 HOMOLOG"/>
    <property type="match status" value="1"/>
</dbReference>
<dbReference type="Pfam" id="PF01871">
    <property type="entry name" value="AMMECR1"/>
    <property type="match status" value="1"/>
</dbReference>
<dbReference type="SUPFAM" id="SSF143447">
    <property type="entry name" value="AMMECR1-like"/>
    <property type="match status" value="1"/>
</dbReference>
<dbReference type="PROSITE" id="PS51112">
    <property type="entry name" value="AMMECR1"/>
    <property type="match status" value="1"/>
</dbReference>
<organism>
    <name type="scientific">Halobacterium salinarum (strain ATCC 700922 / JCM 11081 / NRC-1)</name>
    <name type="common">Halobacterium halobium</name>
    <dbReference type="NCBI Taxonomy" id="64091"/>
    <lineage>
        <taxon>Archaea</taxon>
        <taxon>Methanobacteriati</taxon>
        <taxon>Methanobacteriota</taxon>
        <taxon>Stenosarchaea group</taxon>
        <taxon>Halobacteria</taxon>
        <taxon>Halobacteriales</taxon>
        <taxon>Halobacteriaceae</taxon>
        <taxon>Halobacterium</taxon>
        <taxon>Halobacterium salinarum NRC-34001</taxon>
    </lineage>
</organism>
<reference key="1">
    <citation type="journal article" date="2000" name="Proc. Natl. Acad. Sci. U.S.A.">
        <title>Genome sequence of Halobacterium species NRC-1.</title>
        <authorList>
            <person name="Ng W.V."/>
            <person name="Kennedy S.P."/>
            <person name="Mahairas G.G."/>
            <person name="Berquist B."/>
            <person name="Pan M."/>
            <person name="Shukla H.D."/>
            <person name="Lasky S.R."/>
            <person name="Baliga N.S."/>
            <person name="Thorsson V."/>
            <person name="Sbrogna J."/>
            <person name="Swartzell S."/>
            <person name="Weir D."/>
            <person name="Hall J."/>
            <person name="Dahl T.A."/>
            <person name="Welti R."/>
            <person name="Goo Y.A."/>
            <person name="Leithauser B."/>
            <person name="Keller K."/>
            <person name="Cruz R."/>
            <person name="Danson M.J."/>
            <person name="Hough D.W."/>
            <person name="Maddocks D.G."/>
            <person name="Jablonski P.E."/>
            <person name="Krebs M.P."/>
            <person name="Angevine C.M."/>
            <person name="Dale H."/>
            <person name="Isenbarger T.A."/>
            <person name="Peck R.F."/>
            <person name="Pohlschroder M."/>
            <person name="Spudich J.L."/>
            <person name="Jung K.-H."/>
            <person name="Alam M."/>
            <person name="Freitas T."/>
            <person name="Hou S."/>
            <person name="Daniels C.J."/>
            <person name="Dennis P.P."/>
            <person name="Omer A.D."/>
            <person name="Ebhardt H."/>
            <person name="Lowe T.M."/>
            <person name="Liang P."/>
            <person name="Riley M."/>
            <person name="Hood L."/>
            <person name="DasSarma S."/>
        </authorList>
    </citation>
    <scope>NUCLEOTIDE SEQUENCE [LARGE SCALE GENOMIC DNA]</scope>
    <source>
        <strain>ATCC 700922 / JCM 11081 / NRC-1</strain>
    </source>
</reference>
<sequence>MGQGQSVILSFEDGARTVELARESVEAFVQNGQREQPGSMRDAFYNRTSAFVRLESTRGRGRLRGCAGAHGSIHELGNHDQQLGHAIVEAAIEAASEASCGSEVEDAELPNIRVSVCTVSNLVLTDDPIEDIELGVHGVAIDGDGQHGWMYPTLPVENDWSVFEYLDRTCRKANLPDGAWQDEDVMVTLFEGQVFRETGDEDDPVEELTA</sequence>
<proteinExistence type="predicted"/>
<keyword id="KW-1185">Reference proteome</keyword>
<gene>
    <name type="ordered locus">VNG_2543C</name>
</gene>